<keyword id="KW-0009">Actin-binding</keyword>
<keyword id="KW-0880">Kelch repeat</keyword>
<keyword id="KW-1185">Reference proteome</keyword>
<keyword id="KW-0677">Repeat</keyword>
<keyword id="KW-0770">Synapse</keyword>
<keyword id="KW-0833">Ubl conjugation pathway</keyword>
<reference key="1">
    <citation type="submission" date="2003-09" db="EMBL/GenBank/DDBJ databases">
        <authorList>
            <person name="Huang C.Q."/>
            <person name="Wu S.L."/>
            <person name="Shan Y.X."/>
        </authorList>
    </citation>
    <scope>NUCLEOTIDE SEQUENCE [MRNA]</scope>
    <source>
        <strain>C57BL/6J</strain>
    </source>
</reference>
<reference key="2">
    <citation type="journal article" date="2010" name="Cell">
        <title>A tissue-specific atlas of mouse protein phosphorylation and expression.</title>
        <authorList>
            <person name="Huttlin E.L."/>
            <person name="Jedrychowski M.P."/>
            <person name="Elias J.E."/>
            <person name="Goswami T."/>
            <person name="Rad R."/>
            <person name="Beausoleil S.A."/>
            <person name="Villen J."/>
            <person name="Haas W."/>
            <person name="Sowa M.E."/>
            <person name="Gygi S.P."/>
        </authorList>
    </citation>
    <scope>IDENTIFICATION BY MASS SPECTROMETRY [LARGE SCALE ANALYSIS]</scope>
    <source>
        <tissue>Pancreas</tissue>
    </source>
</reference>
<proteinExistence type="evidence at protein level"/>
<protein>
    <recommendedName>
        <fullName>Kelch-like protein 17</fullName>
    </recommendedName>
    <alternativeName>
        <fullName>Actinfilin</fullName>
    </alternativeName>
</protein>
<accession>Q6TDP3</accession>
<gene>
    <name type="primary">Klhl17</name>
</gene>
<feature type="chain" id="PRO_0000119120" description="Kelch-like protein 17">
    <location>
        <begin position="1"/>
        <end position="640"/>
    </location>
</feature>
<feature type="domain" description="BTB" evidence="3">
    <location>
        <begin position="90"/>
        <end position="157"/>
    </location>
</feature>
<feature type="domain" description="BACK">
    <location>
        <begin position="192"/>
        <end position="294"/>
    </location>
</feature>
<feature type="repeat" description="Kelch 1">
    <location>
        <begin position="341"/>
        <end position="387"/>
    </location>
</feature>
<feature type="repeat" description="Kelch 2">
    <location>
        <begin position="388"/>
        <end position="434"/>
    </location>
</feature>
<feature type="repeat" description="Kelch 3">
    <location>
        <begin position="436"/>
        <end position="481"/>
    </location>
</feature>
<feature type="repeat" description="Kelch 4">
    <location>
        <begin position="482"/>
        <end position="528"/>
    </location>
</feature>
<feature type="repeat" description="Kelch 5">
    <location>
        <begin position="530"/>
        <end position="575"/>
    </location>
</feature>
<feature type="repeat" description="Kelch 6">
    <location>
        <begin position="576"/>
        <end position="622"/>
    </location>
</feature>
<feature type="region of interest" description="Disordered" evidence="4">
    <location>
        <begin position="1"/>
        <end position="50"/>
    </location>
</feature>
<feature type="region of interest" description="Interaction with F-actin" evidence="1">
    <location>
        <begin position="287"/>
        <end position="639"/>
    </location>
</feature>
<feature type="region of interest" description="Interaction with PDZK1" evidence="1">
    <location>
        <begin position="638"/>
        <end position="640"/>
    </location>
</feature>
<feature type="compositionally biased region" description="Pro residues" evidence="4">
    <location>
        <begin position="21"/>
        <end position="35"/>
    </location>
</feature>
<comment type="function">
    <text evidence="1">Substrate-recognition component of some cullin-RING-based BCR (BTB-CUL3-RBX1) E3 ubiquitin-protein ligase complexes. The BCR(KLHL17) complex mediates the ubiquitination and subsequent degradation of GLUR6. May play a role in the actin-based neuronal function (By similarity).</text>
</comment>
<comment type="pathway">
    <text>Protein modification; protein ubiquitination.</text>
</comment>
<comment type="subunit">
    <text evidence="1">Interacts with F-actin; the interaction disrupts the F-actin structures and leads to marked changes of neuronal morphology. Component of a complex, composed of PDZK1, SYNGAP1, KLHL17 and NMDA receptors. Interacts directly with PDZK1 (via PDZ1 domain); the interaction is important for integrity of actin cytoskeleton structures in neurons. Interacts with DLG4 and SYNGAP1. Interacts (via kelch repeats) with GRIK2 (via C-terminus); the interaction targets GRIK2 for degradation via ubiquitin-proteasome pathway. Interacts with GRIK1. Interacts with (via BTB domain) CUL3; the interaction regulates surface GRIK2 expression (By similarity).</text>
</comment>
<comment type="subcellular location">
    <subcellularLocation>
        <location evidence="2">Postsynaptic density</location>
    </subcellularLocation>
    <subcellularLocation>
        <location evidence="2">Synapse</location>
    </subcellularLocation>
</comment>
<name>KLH17_MOUSE</name>
<sequence length="640" mass="69732">MQPRGERPAGRTQSPEHSSPGPGPEAPPPPQPPAPEAERARPRQARPAAPMEGAMQLLSREGHSVAHNSKRHYHDAFVAMSRMRQRGLLCDIVLHVAAKEIRAHKVVLASCSPYFHAMFTNEMSESRQTHVTLHDIDPQALDQLVQFAYTAEIVVGEGNVQTLLPAASLLQLNGVRDACCKFLLSQLDPSNCLGIRGFADTHSCSDLLKAAHRYVLQHFVDVAKTEEFMLLPLKQVLELVSSDSLNVPSEEDVYRAVLSWVKHDVDTRRQHVPRLMKCVRLPLLSRDFLLGHVDAESLVRHHPDCKDLLIEALKFHLLPEQRGVLGTSRTRPRRCEGAGPVLFAVGGGSLFAIHGDCEAYDTRTDRWHVVASMSTRRARVGVAAVGNRLYAVGGYDGTSDLATVESYDPVTNTWQPEVSMGTRRSCLGVAALHGLLYAAGGYDGASCLNSAERYDPLTGTWTSIAAMSTRRRYVRVATLDGNLYAVGGYDSSSHLATVEKYEPQVNSWTPVASMLSRRSSAGVAVLEGALYVAGGNDGTSCLNSVERYSTKAGAWESVAPMNIRRSTHDLVAMDGWLYAVGGNDGSSSLNSIEKYNPRTNKWVAASCMFTRRSSVGVAVLELLNFPPPSSPTLSVSSTSL</sequence>
<evidence type="ECO:0000250" key="1"/>
<evidence type="ECO:0000250" key="2">
    <source>
        <dbReference type="UniProtKB" id="Q8K430"/>
    </source>
</evidence>
<evidence type="ECO:0000255" key="3">
    <source>
        <dbReference type="PROSITE-ProRule" id="PRU00037"/>
    </source>
</evidence>
<evidence type="ECO:0000256" key="4">
    <source>
        <dbReference type="SAM" id="MobiDB-lite"/>
    </source>
</evidence>
<dbReference type="EMBL" id="AY423764">
    <property type="protein sequence ID" value="AAR03711.1"/>
    <property type="molecule type" value="mRNA"/>
</dbReference>
<dbReference type="CCDS" id="CCDS38999.1"/>
<dbReference type="RefSeq" id="NP_938047.1">
    <property type="nucleotide sequence ID" value="NM_198305.2"/>
</dbReference>
<dbReference type="SMR" id="Q6TDP3"/>
<dbReference type="BioGRID" id="231070">
    <property type="interactions" value="17"/>
</dbReference>
<dbReference type="FunCoup" id="Q6TDP3">
    <property type="interactions" value="49"/>
</dbReference>
<dbReference type="STRING" id="10090.ENSMUSP00000101194"/>
<dbReference type="PhosphoSitePlus" id="Q6TDP3"/>
<dbReference type="PaxDb" id="10090-ENSMUSP00000101194"/>
<dbReference type="ProteomicsDB" id="264999"/>
<dbReference type="Antibodypedia" id="26039">
    <property type="antibodies" value="16 antibodies from 10 providers"/>
</dbReference>
<dbReference type="DNASU" id="231003"/>
<dbReference type="Ensembl" id="ENSMUST00000105569.5">
    <property type="protein sequence ID" value="ENSMUSP00000101194.4"/>
    <property type="gene ID" value="ENSMUSG00002076083.1"/>
</dbReference>
<dbReference type="GeneID" id="231003"/>
<dbReference type="KEGG" id="mmu:231003"/>
<dbReference type="UCSC" id="uc008wgs.2">
    <property type="organism name" value="mouse"/>
</dbReference>
<dbReference type="AGR" id="MGI:2678948"/>
<dbReference type="CTD" id="339451"/>
<dbReference type="MGI" id="MGI:2678948">
    <property type="gene designation" value="Klhl17"/>
</dbReference>
<dbReference type="VEuPathDB" id="HostDB:ENSMUSG00000078485"/>
<dbReference type="eggNOG" id="KOG4441">
    <property type="taxonomic scope" value="Eukaryota"/>
</dbReference>
<dbReference type="GeneTree" id="ENSGT00940000157635"/>
<dbReference type="HOGENOM" id="CLU_004253_14_1_1"/>
<dbReference type="InParanoid" id="Q6TDP3"/>
<dbReference type="OMA" id="RRNCWEP"/>
<dbReference type="OrthoDB" id="45365at2759"/>
<dbReference type="PhylomeDB" id="Q6TDP3"/>
<dbReference type="TreeFam" id="TF329218"/>
<dbReference type="UniPathway" id="UPA00143"/>
<dbReference type="BioGRID-ORCS" id="231003">
    <property type="hits" value="2 hits in 79 CRISPR screens"/>
</dbReference>
<dbReference type="ChiTaRS" id="Klhl17">
    <property type="organism name" value="mouse"/>
</dbReference>
<dbReference type="PRO" id="PR:Q6TDP3"/>
<dbReference type="Proteomes" id="UP000000589">
    <property type="component" value="Chromosome 4"/>
</dbReference>
<dbReference type="RNAct" id="Q6TDP3">
    <property type="molecule type" value="protein"/>
</dbReference>
<dbReference type="ExpressionAtlas" id="Q6TDP3">
    <property type="expression patterns" value="baseline and differential"/>
</dbReference>
<dbReference type="GO" id="GO:0015629">
    <property type="term" value="C:actin cytoskeleton"/>
    <property type="evidence" value="ECO:0000250"/>
    <property type="project" value="UniProtKB"/>
</dbReference>
<dbReference type="GO" id="GO:0014069">
    <property type="term" value="C:postsynaptic density"/>
    <property type="evidence" value="ECO:0007669"/>
    <property type="project" value="UniProtKB-SubCell"/>
</dbReference>
<dbReference type="GO" id="GO:0003779">
    <property type="term" value="F:actin binding"/>
    <property type="evidence" value="ECO:0007669"/>
    <property type="project" value="UniProtKB-KW"/>
</dbReference>
<dbReference type="GO" id="GO:0060090">
    <property type="term" value="F:molecular adaptor activity"/>
    <property type="evidence" value="ECO:0000250"/>
    <property type="project" value="UniProtKB"/>
</dbReference>
<dbReference type="GO" id="GO:0030036">
    <property type="term" value="P:actin cytoskeleton organization"/>
    <property type="evidence" value="ECO:0000250"/>
    <property type="project" value="UniProtKB"/>
</dbReference>
<dbReference type="GO" id="GO:0016567">
    <property type="term" value="P:protein ubiquitination"/>
    <property type="evidence" value="ECO:0007669"/>
    <property type="project" value="UniProtKB-UniPathway"/>
</dbReference>
<dbReference type="CDD" id="cd18246">
    <property type="entry name" value="BTB_POZ_KLHL17_actinfilin"/>
    <property type="match status" value="1"/>
</dbReference>
<dbReference type="FunFam" id="1.25.40.420:FF:000001">
    <property type="entry name" value="Kelch-like family member 12"/>
    <property type="match status" value="1"/>
</dbReference>
<dbReference type="FunFam" id="2.120.10.80:FF:000019">
    <property type="entry name" value="Kelch-like family member 17"/>
    <property type="match status" value="1"/>
</dbReference>
<dbReference type="FunFam" id="2.120.10.80:FF:000029">
    <property type="entry name" value="Kelch-like family member 17"/>
    <property type="match status" value="1"/>
</dbReference>
<dbReference type="FunFam" id="3.30.710.10:FF:000001">
    <property type="entry name" value="Kelch-like family member 20"/>
    <property type="match status" value="1"/>
</dbReference>
<dbReference type="Gene3D" id="1.25.40.420">
    <property type="match status" value="1"/>
</dbReference>
<dbReference type="Gene3D" id="2.120.10.80">
    <property type="entry name" value="Kelch-type beta propeller"/>
    <property type="match status" value="2"/>
</dbReference>
<dbReference type="Gene3D" id="3.30.710.10">
    <property type="entry name" value="Potassium Channel Kv1.1, Chain A"/>
    <property type="match status" value="1"/>
</dbReference>
<dbReference type="InterPro" id="IPR011705">
    <property type="entry name" value="BACK"/>
</dbReference>
<dbReference type="InterPro" id="IPR017096">
    <property type="entry name" value="BTB-kelch_protein"/>
</dbReference>
<dbReference type="InterPro" id="IPR000210">
    <property type="entry name" value="BTB/POZ_dom"/>
</dbReference>
<dbReference type="InterPro" id="IPR011043">
    <property type="entry name" value="Gal_Oxase/kelch_b-propeller"/>
</dbReference>
<dbReference type="InterPro" id="IPR015915">
    <property type="entry name" value="Kelch-typ_b-propeller"/>
</dbReference>
<dbReference type="InterPro" id="IPR006652">
    <property type="entry name" value="Kelch_1"/>
</dbReference>
<dbReference type="InterPro" id="IPR011333">
    <property type="entry name" value="SKP1/BTB/POZ_sf"/>
</dbReference>
<dbReference type="PANTHER" id="PTHR24412">
    <property type="entry name" value="KELCH PROTEIN"/>
    <property type="match status" value="1"/>
</dbReference>
<dbReference type="PANTHER" id="PTHR24412:SF475">
    <property type="entry name" value="KELCH-LIKE PROTEIN 17"/>
    <property type="match status" value="1"/>
</dbReference>
<dbReference type="Pfam" id="PF07707">
    <property type="entry name" value="BACK"/>
    <property type="match status" value="1"/>
</dbReference>
<dbReference type="Pfam" id="PF00651">
    <property type="entry name" value="BTB"/>
    <property type="match status" value="1"/>
</dbReference>
<dbReference type="Pfam" id="PF01344">
    <property type="entry name" value="Kelch_1"/>
    <property type="match status" value="5"/>
</dbReference>
<dbReference type="PIRSF" id="PIRSF037037">
    <property type="entry name" value="Kelch-like_protein_gigaxonin"/>
    <property type="match status" value="1"/>
</dbReference>
<dbReference type="PRINTS" id="PR00501">
    <property type="entry name" value="KELCHREPEAT"/>
</dbReference>
<dbReference type="SMART" id="SM00875">
    <property type="entry name" value="BACK"/>
    <property type="match status" value="1"/>
</dbReference>
<dbReference type="SMART" id="SM00225">
    <property type="entry name" value="BTB"/>
    <property type="match status" value="1"/>
</dbReference>
<dbReference type="SMART" id="SM00612">
    <property type="entry name" value="Kelch"/>
    <property type="match status" value="6"/>
</dbReference>
<dbReference type="SUPFAM" id="SSF50965">
    <property type="entry name" value="Galactose oxidase, central domain"/>
    <property type="match status" value="1"/>
</dbReference>
<dbReference type="SUPFAM" id="SSF54695">
    <property type="entry name" value="POZ domain"/>
    <property type="match status" value="1"/>
</dbReference>
<dbReference type="PROSITE" id="PS50097">
    <property type="entry name" value="BTB"/>
    <property type="match status" value="1"/>
</dbReference>
<organism>
    <name type="scientific">Mus musculus</name>
    <name type="common">Mouse</name>
    <dbReference type="NCBI Taxonomy" id="10090"/>
    <lineage>
        <taxon>Eukaryota</taxon>
        <taxon>Metazoa</taxon>
        <taxon>Chordata</taxon>
        <taxon>Craniata</taxon>
        <taxon>Vertebrata</taxon>
        <taxon>Euteleostomi</taxon>
        <taxon>Mammalia</taxon>
        <taxon>Eutheria</taxon>
        <taxon>Euarchontoglires</taxon>
        <taxon>Glires</taxon>
        <taxon>Rodentia</taxon>
        <taxon>Myomorpha</taxon>
        <taxon>Muroidea</taxon>
        <taxon>Muridae</taxon>
        <taxon>Murinae</taxon>
        <taxon>Mus</taxon>
        <taxon>Mus</taxon>
    </lineage>
</organism>